<reference key="1">
    <citation type="journal article" date="2002" name="Nature">
        <title>The genome sequence of Schizosaccharomyces pombe.</title>
        <authorList>
            <person name="Wood V."/>
            <person name="Gwilliam R."/>
            <person name="Rajandream M.A."/>
            <person name="Lyne M.H."/>
            <person name="Lyne R."/>
            <person name="Stewart A."/>
            <person name="Sgouros J.G."/>
            <person name="Peat N."/>
            <person name="Hayles J."/>
            <person name="Baker S.G."/>
            <person name="Basham D."/>
            <person name="Bowman S."/>
            <person name="Brooks K."/>
            <person name="Brown D."/>
            <person name="Brown S."/>
            <person name="Chillingworth T."/>
            <person name="Churcher C.M."/>
            <person name="Collins M."/>
            <person name="Connor R."/>
            <person name="Cronin A."/>
            <person name="Davis P."/>
            <person name="Feltwell T."/>
            <person name="Fraser A."/>
            <person name="Gentles S."/>
            <person name="Goble A."/>
            <person name="Hamlin N."/>
            <person name="Harris D.E."/>
            <person name="Hidalgo J."/>
            <person name="Hodgson G."/>
            <person name="Holroyd S."/>
            <person name="Hornsby T."/>
            <person name="Howarth S."/>
            <person name="Huckle E.J."/>
            <person name="Hunt S."/>
            <person name="Jagels K."/>
            <person name="James K.D."/>
            <person name="Jones L."/>
            <person name="Jones M."/>
            <person name="Leather S."/>
            <person name="McDonald S."/>
            <person name="McLean J."/>
            <person name="Mooney P."/>
            <person name="Moule S."/>
            <person name="Mungall K.L."/>
            <person name="Murphy L.D."/>
            <person name="Niblett D."/>
            <person name="Odell C."/>
            <person name="Oliver K."/>
            <person name="O'Neil S."/>
            <person name="Pearson D."/>
            <person name="Quail M.A."/>
            <person name="Rabbinowitsch E."/>
            <person name="Rutherford K.M."/>
            <person name="Rutter S."/>
            <person name="Saunders D."/>
            <person name="Seeger K."/>
            <person name="Sharp S."/>
            <person name="Skelton J."/>
            <person name="Simmonds M.N."/>
            <person name="Squares R."/>
            <person name="Squares S."/>
            <person name="Stevens K."/>
            <person name="Taylor K."/>
            <person name="Taylor R.G."/>
            <person name="Tivey A."/>
            <person name="Walsh S.V."/>
            <person name="Warren T."/>
            <person name="Whitehead S."/>
            <person name="Woodward J.R."/>
            <person name="Volckaert G."/>
            <person name="Aert R."/>
            <person name="Robben J."/>
            <person name="Grymonprez B."/>
            <person name="Weltjens I."/>
            <person name="Vanstreels E."/>
            <person name="Rieger M."/>
            <person name="Schaefer M."/>
            <person name="Mueller-Auer S."/>
            <person name="Gabel C."/>
            <person name="Fuchs M."/>
            <person name="Duesterhoeft A."/>
            <person name="Fritzc C."/>
            <person name="Holzer E."/>
            <person name="Moestl D."/>
            <person name="Hilbert H."/>
            <person name="Borzym K."/>
            <person name="Langer I."/>
            <person name="Beck A."/>
            <person name="Lehrach H."/>
            <person name="Reinhardt R."/>
            <person name="Pohl T.M."/>
            <person name="Eger P."/>
            <person name="Zimmermann W."/>
            <person name="Wedler H."/>
            <person name="Wambutt R."/>
            <person name="Purnelle B."/>
            <person name="Goffeau A."/>
            <person name="Cadieu E."/>
            <person name="Dreano S."/>
            <person name="Gloux S."/>
            <person name="Lelaure V."/>
            <person name="Mottier S."/>
            <person name="Galibert F."/>
            <person name="Aves S.J."/>
            <person name="Xiang Z."/>
            <person name="Hunt C."/>
            <person name="Moore K."/>
            <person name="Hurst S.M."/>
            <person name="Lucas M."/>
            <person name="Rochet M."/>
            <person name="Gaillardin C."/>
            <person name="Tallada V.A."/>
            <person name="Garzon A."/>
            <person name="Thode G."/>
            <person name="Daga R.R."/>
            <person name="Cruzado L."/>
            <person name="Jimenez J."/>
            <person name="Sanchez M."/>
            <person name="del Rey F."/>
            <person name="Benito J."/>
            <person name="Dominguez A."/>
            <person name="Revuelta J.L."/>
            <person name="Moreno S."/>
            <person name="Armstrong J."/>
            <person name="Forsburg S.L."/>
            <person name="Cerutti L."/>
            <person name="Lowe T."/>
            <person name="McCombie W.R."/>
            <person name="Paulsen I."/>
            <person name="Potashkin J."/>
            <person name="Shpakovski G.V."/>
            <person name="Ussery D."/>
            <person name="Barrell B.G."/>
            <person name="Nurse P."/>
        </authorList>
    </citation>
    <scope>NUCLEOTIDE SEQUENCE [LARGE SCALE GENOMIC DNA]</scope>
    <source>
        <strain>972 / ATCC 24843</strain>
    </source>
</reference>
<proteinExistence type="predicted"/>
<keyword id="KW-1185">Reference proteome</keyword>
<protein>
    <recommendedName>
        <fullName>Uncharacterized protein C18B5.09c</fullName>
    </recommendedName>
</protein>
<dbReference type="EMBL" id="CU329672">
    <property type="protein sequence ID" value="CAB52156.1"/>
    <property type="molecule type" value="Genomic_DNA"/>
</dbReference>
<dbReference type="PIR" id="T41202">
    <property type="entry name" value="T41202"/>
</dbReference>
<dbReference type="BioGRID" id="275748">
    <property type="interactions" value="2"/>
</dbReference>
<dbReference type="STRING" id="284812.Q9USL2"/>
<dbReference type="iPTMnet" id="Q9USL2"/>
<dbReference type="PaxDb" id="4896-SPCC18B5.09c.1"/>
<dbReference type="EnsemblFungi" id="SPCC18B5.09c.1">
    <property type="protein sequence ID" value="SPCC18B5.09c.1:pep"/>
    <property type="gene ID" value="SPCC18B5.09c"/>
</dbReference>
<dbReference type="KEGG" id="spo:2539177"/>
<dbReference type="PomBase" id="SPCC18B5.09c"/>
<dbReference type="VEuPathDB" id="FungiDB:SPCC18B5.09c"/>
<dbReference type="HOGENOM" id="CLU_2098241_0_0_1"/>
<dbReference type="InParanoid" id="Q9USL2"/>
<dbReference type="OMA" id="NIIITWE"/>
<dbReference type="PRO" id="PR:Q9USL2"/>
<dbReference type="Proteomes" id="UP000002485">
    <property type="component" value="Chromosome III"/>
</dbReference>
<dbReference type="GO" id="GO:0005829">
    <property type="term" value="C:cytosol"/>
    <property type="evidence" value="ECO:0007005"/>
    <property type="project" value="PomBase"/>
</dbReference>
<dbReference type="GO" id="GO:0005634">
    <property type="term" value="C:nucleus"/>
    <property type="evidence" value="ECO:0007005"/>
    <property type="project" value="PomBase"/>
</dbReference>
<dbReference type="GO" id="GO:0005732">
    <property type="term" value="C:sno(s)RNA-containing ribonucleoprotein complex"/>
    <property type="evidence" value="ECO:0000269"/>
    <property type="project" value="PomBase"/>
</dbReference>
<dbReference type="GO" id="GO:0016180">
    <property type="term" value="P:snRNA processing"/>
    <property type="evidence" value="ECO:0000315"/>
    <property type="project" value="PomBase"/>
</dbReference>
<dbReference type="InterPro" id="IPR053800">
    <property type="entry name" value="Thc1_RRM"/>
</dbReference>
<dbReference type="Pfam" id="PF22877">
    <property type="entry name" value="RRM_Thc1"/>
    <property type="match status" value="1"/>
</dbReference>
<accession>Q9USL2</accession>
<sequence>MEEKNTVSLSKHIERPVEVVESHSTYILSAQGLYLTERVLRSYFKQPDLIITWKDSMRAYLTFSSPQEAQKAYLDSLRWGSQLNAIIKPFYGSHDEVLRLCKRKRIIPLQNFLTSG</sequence>
<feature type="chain" id="PRO_0000116814" description="Uncharacterized protein C18B5.09c">
    <location>
        <begin position="1"/>
        <end position="116"/>
    </location>
</feature>
<name>YJK9_SCHPO</name>
<organism>
    <name type="scientific">Schizosaccharomyces pombe (strain 972 / ATCC 24843)</name>
    <name type="common">Fission yeast</name>
    <dbReference type="NCBI Taxonomy" id="284812"/>
    <lineage>
        <taxon>Eukaryota</taxon>
        <taxon>Fungi</taxon>
        <taxon>Dikarya</taxon>
        <taxon>Ascomycota</taxon>
        <taxon>Taphrinomycotina</taxon>
        <taxon>Schizosaccharomycetes</taxon>
        <taxon>Schizosaccharomycetales</taxon>
        <taxon>Schizosaccharomycetaceae</taxon>
        <taxon>Schizosaccharomyces</taxon>
    </lineage>
</organism>
<gene>
    <name type="ORF">SPCC18B5.09c</name>
</gene>